<comment type="similarity">
    <text evidence="1">Belongs to the elongation factor P family.</text>
</comment>
<comment type="sequence caution" evidence="2">
    <conflict type="erroneous initiation">
        <sequence resource="EMBL-CDS" id="AAN43777"/>
    </conflict>
</comment>
<comment type="sequence caution" evidence="2">
    <conflict type="erroneous initiation">
        <sequence resource="EMBL-CDS" id="AAP17594"/>
    </conflict>
</comment>
<feature type="chain" id="PRO_0000094388" description="Elongation factor P-like protein">
    <location>
        <begin position="1"/>
        <end position="190"/>
    </location>
</feature>
<dbReference type="EMBL" id="AE005674">
    <property type="protein sequence ID" value="AAN43777.2"/>
    <property type="status" value="ALT_INIT"/>
    <property type="molecule type" value="Genomic_DNA"/>
</dbReference>
<dbReference type="EMBL" id="AE014073">
    <property type="protein sequence ID" value="AAP17594.1"/>
    <property type="status" value="ALT_INIT"/>
    <property type="molecule type" value="Genomic_DNA"/>
</dbReference>
<dbReference type="RefSeq" id="WP_001136824.1">
    <property type="nucleotide sequence ID" value="NZ_WPGW01000022.1"/>
</dbReference>
<dbReference type="SMR" id="Q83KE6"/>
<dbReference type="STRING" id="198214.SF2258"/>
<dbReference type="PaxDb" id="198214-SF2258"/>
<dbReference type="KEGG" id="sfx:S2387"/>
<dbReference type="PATRIC" id="fig|623.156.peg.4079"/>
<dbReference type="HOGENOM" id="CLU_074944_2_0_6"/>
<dbReference type="Proteomes" id="UP000001006">
    <property type="component" value="Chromosome"/>
</dbReference>
<dbReference type="Proteomes" id="UP000002673">
    <property type="component" value="Chromosome"/>
</dbReference>
<dbReference type="GO" id="GO:0005829">
    <property type="term" value="C:cytosol"/>
    <property type="evidence" value="ECO:0007669"/>
    <property type="project" value="UniProtKB-ARBA"/>
</dbReference>
<dbReference type="GO" id="GO:0003746">
    <property type="term" value="F:translation elongation factor activity"/>
    <property type="evidence" value="ECO:0007669"/>
    <property type="project" value="UniProtKB-UniRule"/>
</dbReference>
<dbReference type="GO" id="GO:0043043">
    <property type="term" value="P:peptide biosynthetic process"/>
    <property type="evidence" value="ECO:0007669"/>
    <property type="project" value="InterPro"/>
</dbReference>
<dbReference type="CDD" id="cd04470">
    <property type="entry name" value="S1_EF-P_repeat_1"/>
    <property type="match status" value="1"/>
</dbReference>
<dbReference type="CDD" id="cd05794">
    <property type="entry name" value="S1_EF-P_repeat_2"/>
    <property type="match status" value="1"/>
</dbReference>
<dbReference type="FunFam" id="2.40.50.140:FF:000004">
    <property type="entry name" value="Elongation factor P"/>
    <property type="match status" value="1"/>
</dbReference>
<dbReference type="FunFam" id="2.30.30.30:FF:000011">
    <property type="entry name" value="Elongation factor P-like protein"/>
    <property type="match status" value="1"/>
</dbReference>
<dbReference type="FunFam" id="2.40.50.140:FF:000053">
    <property type="entry name" value="Elongation factor P-like protein"/>
    <property type="match status" value="1"/>
</dbReference>
<dbReference type="Gene3D" id="2.30.30.30">
    <property type="match status" value="1"/>
</dbReference>
<dbReference type="Gene3D" id="2.40.50.140">
    <property type="entry name" value="Nucleic acid-binding proteins"/>
    <property type="match status" value="2"/>
</dbReference>
<dbReference type="HAMAP" id="MF_00646">
    <property type="entry name" value="EFP"/>
    <property type="match status" value="1"/>
</dbReference>
<dbReference type="InterPro" id="IPR015365">
    <property type="entry name" value="Elong-fact-P_C"/>
</dbReference>
<dbReference type="InterPro" id="IPR012340">
    <property type="entry name" value="NA-bd_OB-fold"/>
</dbReference>
<dbReference type="InterPro" id="IPR014722">
    <property type="entry name" value="Rib_uL2_dom2"/>
</dbReference>
<dbReference type="InterPro" id="IPR020599">
    <property type="entry name" value="Transl_elong_fac_P/YeiP"/>
</dbReference>
<dbReference type="InterPro" id="IPR013185">
    <property type="entry name" value="Transl_elong_KOW-like"/>
</dbReference>
<dbReference type="InterPro" id="IPR011897">
    <property type="entry name" value="Transl_elong_p-like_YeiP"/>
</dbReference>
<dbReference type="InterPro" id="IPR001059">
    <property type="entry name" value="Transl_elong_P/YeiP_cen"/>
</dbReference>
<dbReference type="InterPro" id="IPR013852">
    <property type="entry name" value="Transl_elong_P/YeiP_CS"/>
</dbReference>
<dbReference type="InterPro" id="IPR008991">
    <property type="entry name" value="Translation_prot_SH3-like_sf"/>
</dbReference>
<dbReference type="NCBIfam" id="NF001810">
    <property type="entry name" value="PRK00529.1"/>
    <property type="match status" value="1"/>
</dbReference>
<dbReference type="NCBIfam" id="NF003392">
    <property type="entry name" value="PRK04542.1"/>
    <property type="match status" value="1"/>
</dbReference>
<dbReference type="NCBIfam" id="TIGR02178">
    <property type="entry name" value="yeiP"/>
    <property type="match status" value="1"/>
</dbReference>
<dbReference type="PANTHER" id="PTHR30053">
    <property type="entry name" value="ELONGATION FACTOR P"/>
    <property type="match status" value="1"/>
</dbReference>
<dbReference type="PANTHER" id="PTHR30053:SF14">
    <property type="entry name" value="TRANSLATION ELONGATION FACTOR KOW-LIKE DOMAIN-CONTAINING PROTEIN"/>
    <property type="match status" value="1"/>
</dbReference>
<dbReference type="Pfam" id="PF01132">
    <property type="entry name" value="EFP"/>
    <property type="match status" value="1"/>
</dbReference>
<dbReference type="Pfam" id="PF08207">
    <property type="entry name" value="EFP_N"/>
    <property type="match status" value="1"/>
</dbReference>
<dbReference type="Pfam" id="PF09285">
    <property type="entry name" value="Elong-fact-P_C"/>
    <property type="match status" value="1"/>
</dbReference>
<dbReference type="PIRSF" id="PIRSF005901">
    <property type="entry name" value="EF-P"/>
    <property type="match status" value="1"/>
</dbReference>
<dbReference type="SMART" id="SM01185">
    <property type="entry name" value="EFP"/>
    <property type="match status" value="1"/>
</dbReference>
<dbReference type="SMART" id="SM00841">
    <property type="entry name" value="Elong-fact-P_C"/>
    <property type="match status" value="1"/>
</dbReference>
<dbReference type="SUPFAM" id="SSF50249">
    <property type="entry name" value="Nucleic acid-binding proteins"/>
    <property type="match status" value="2"/>
</dbReference>
<dbReference type="SUPFAM" id="SSF50104">
    <property type="entry name" value="Translation proteins SH3-like domain"/>
    <property type="match status" value="1"/>
</dbReference>
<dbReference type="PROSITE" id="PS01275">
    <property type="entry name" value="EFP"/>
    <property type="match status" value="1"/>
</dbReference>
<protein>
    <recommendedName>
        <fullName evidence="1">Elongation factor P-like protein</fullName>
    </recommendedName>
</protein>
<name>EFPL_SHIFL</name>
<keyword id="KW-1185">Reference proteome</keyword>
<organism>
    <name type="scientific">Shigella flexneri</name>
    <dbReference type="NCBI Taxonomy" id="623"/>
    <lineage>
        <taxon>Bacteria</taxon>
        <taxon>Pseudomonadati</taxon>
        <taxon>Pseudomonadota</taxon>
        <taxon>Gammaproteobacteria</taxon>
        <taxon>Enterobacterales</taxon>
        <taxon>Enterobacteriaceae</taxon>
        <taxon>Shigella</taxon>
    </lineage>
</organism>
<sequence>MPRANEIKKGMVLNYNGKLLLAKDIDIQSPTARGAATLYKMRFSDVRTGLKVEERFKGDDIVDTVTLTRRYVDFSYVDGNEYVFMDKEDYTPYTFTKDQIEEELLFMPEGGMPDMQVLTWDGQLLALELPQTVDLEIVETAPGIKGASASARNKPATLSTGLVIQVPEYLSPGEKIRIHIEERRYMGRAD</sequence>
<accession>Q83KE6</accession>
<accession>Q7UC85</accession>
<gene>
    <name evidence="1" type="primary">yeiP</name>
    <name type="ordered locus">SF2258</name>
    <name type="ordered locus">S2387</name>
</gene>
<reference key="1">
    <citation type="journal article" date="2002" name="Nucleic Acids Res.">
        <title>Genome sequence of Shigella flexneri 2a: insights into pathogenicity through comparison with genomes of Escherichia coli K12 and O157.</title>
        <authorList>
            <person name="Jin Q."/>
            <person name="Yuan Z."/>
            <person name="Xu J."/>
            <person name="Wang Y."/>
            <person name="Shen Y."/>
            <person name="Lu W."/>
            <person name="Wang J."/>
            <person name="Liu H."/>
            <person name="Yang J."/>
            <person name="Yang F."/>
            <person name="Zhang X."/>
            <person name="Zhang J."/>
            <person name="Yang G."/>
            <person name="Wu H."/>
            <person name="Qu D."/>
            <person name="Dong J."/>
            <person name="Sun L."/>
            <person name="Xue Y."/>
            <person name="Zhao A."/>
            <person name="Gao Y."/>
            <person name="Zhu J."/>
            <person name="Kan B."/>
            <person name="Ding K."/>
            <person name="Chen S."/>
            <person name="Cheng H."/>
            <person name="Yao Z."/>
            <person name="He B."/>
            <person name="Chen R."/>
            <person name="Ma D."/>
            <person name="Qiang B."/>
            <person name="Wen Y."/>
            <person name="Hou Y."/>
            <person name="Yu J."/>
        </authorList>
    </citation>
    <scope>NUCLEOTIDE SEQUENCE [LARGE SCALE GENOMIC DNA]</scope>
    <source>
        <strain>301 / Serotype 2a</strain>
    </source>
</reference>
<reference key="2">
    <citation type="journal article" date="2003" name="Infect. Immun.">
        <title>Complete genome sequence and comparative genomics of Shigella flexneri serotype 2a strain 2457T.</title>
        <authorList>
            <person name="Wei J."/>
            <person name="Goldberg M.B."/>
            <person name="Burland V."/>
            <person name="Venkatesan M.M."/>
            <person name="Deng W."/>
            <person name="Fournier G."/>
            <person name="Mayhew G.F."/>
            <person name="Plunkett G. III"/>
            <person name="Rose D.J."/>
            <person name="Darling A."/>
            <person name="Mau B."/>
            <person name="Perna N.T."/>
            <person name="Payne S.M."/>
            <person name="Runyen-Janecky L.J."/>
            <person name="Zhou S."/>
            <person name="Schwartz D.C."/>
            <person name="Blattner F.R."/>
        </authorList>
    </citation>
    <scope>NUCLEOTIDE SEQUENCE [LARGE SCALE GENOMIC DNA]</scope>
    <source>
        <strain>ATCC 700930 / 2457T / Serotype 2a</strain>
    </source>
</reference>
<proteinExistence type="inferred from homology"/>
<evidence type="ECO:0000255" key="1">
    <source>
        <dbReference type="HAMAP-Rule" id="MF_00646"/>
    </source>
</evidence>
<evidence type="ECO:0000305" key="2"/>